<reference key="1">
    <citation type="journal article" date="1998" name="Genetics">
        <title>Sum1, a highly conserved WD-repeat protein, suppresses S-M checkpoint mutants and inhibits the osmotic stress cell cycle response in fission yeast.</title>
        <authorList>
            <person name="Humphrey T."/>
            <person name="Enoch T."/>
        </authorList>
    </citation>
    <scope>NUCLEOTIDE SEQUENCE [MRNA]</scope>
    <scope>FUNCTION</scope>
</reference>
<reference key="2">
    <citation type="journal article" date="1997" name="DNA Res.">
        <title>Identification of open reading frames in Schizosaccharomyces pombe cDNAs.</title>
        <authorList>
            <person name="Yoshioka S."/>
            <person name="Kato K."/>
            <person name="Nakai K."/>
            <person name="Okayama H."/>
            <person name="Nojima H."/>
        </authorList>
    </citation>
    <scope>NUCLEOTIDE SEQUENCE [LARGE SCALE MRNA]</scope>
    <source>
        <strain>PR745</strain>
    </source>
</reference>
<reference key="3">
    <citation type="journal article" date="2002" name="Nature">
        <title>The genome sequence of Schizosaccharomyces pombe.</title>
        <authorList>
            <person name="Wood V."/>
            <person name="Gwilliam R."/>
            <person name="Rajandream M.A."/>
            <person name="Lyne M.H."/>
            <person name="Lyne R."/>
            <person name="Stewart A."/>
            <person name="Sgouros J.G."/>
            <person name="Peat N."/>
            <person name="Hayles J."/>
            <person name="Baker S.G."/>
            <person name="Basham D."/>
            <person name="Bowman S."/>
            <person name="Brooks K."/>
            <person name="Brown D."/>
            <person name="Brown S."/>
            <person name="Chillingworth T."/>
            <person name="Churcher C.M."/>
            <person name="Collins M."/>
            <person name="Connor R."/>
            <person name="Cronin A."/>
            <person name="Davis P."/>
            <person name="Feltwell T."/>
            <person name="Fraser A."/>
            <person name="Gentles S."/>
            <person name="Goble A."/>
            <person name="Hamlin N."/>
            <person name="Harris D.E."/>
            <person name="Hidalgo J."/>
            <person name="Hodgson G."/>
            <person name="Holroyd S."/>
            <person name="Hornsby T."/>
            <person name="Howarth S."/>
            <person name="Huckle E.J."/>
            <person name="Hunt S."/>
            <person name="Jagels K."/>
            <person name="James K.D."/>
            <person name="Jones L."/>
            <person name="Jones M."/>
            <person name="Leather S."/>
            <person name="McDonald S."/>
            <person name="McLean J."/>
            <person name="Mooney P."/>
            <person name="Moule S."/>
            <person name="Mungall K.L."/>
            <person name="Murphy L.D."/>
            <person name="Niblett D."/>
            <person name="Odell C."/>
            <person name="Oliver K."/>
            <person name="O'Neil S."/>
            <person name="Pearson D."/>
            <person name="Quail M.A."/>
            <person name="Rabbinowitsch E."/>
            <person name="Rutherford K.M."/>
            <person name="Rutter S."/>
            <person name="Saunders D."/>
            <person name="Seeger K."/>
            <person name="Sharp S."/>
            <person name="Skelton J."/>
            <person name="Simmonds M.N."/>
            <person name="Squares R."/>
            <person name="Squares S."/>
            <person name="Stevens K."/>
            <person name="Taylor K."/>
            <person name="Taylor R.G."/>
            <person name="Tivey A."/>
            <person name="Walsh S.V."/>
            <person name="Warren T."/>
            <person name="Whitehead S."/>
            <person name="Woodward J.R."/>
            <person name="Volckaert G."/>
            <person name="Aert R."/>
            <person name="Robben J."/>
            <person name="Grymonprez B."/>
            <person name="Weltjens I."/>
            <person name="Vanstreels E."/>
            <person name="Rieger M."/>
            <person name="Schaefer M."/>
            <person name="Mueller-Auer S."/>
            <person name="Gabel C."/>
            <person name="Fuchs M."/>
            <person name="Duesterhoeft A."/>
            <person name="Fritzc C."/>
            <person name="Holzer E."/>
            <person name="Moestl D."/>
            <person name="Hilbert H."/>
            <person name="Borzym K."/>
            <person name="Langer I."/>
            <person name="Beck A."/>
            <person name="Lehrach H."/>
            <person name="Reinhardt R."/>
            <person name="Pohl T.M."/>
            <person name="Eger P."/>
            <person name="Zimmermann W."/>
            <person name="Wedler H."/>
            <person name="Wambutt R."/>
            <person name="Purnelle B."/>
            <person name="Goffeau A."/>
            <person name="Cadieu E."/>
            <person name="Dreano S."/>
            <person name="Gloux S."/>
            <person name="Lelaure V."/>
            <person name="Mottier S."/>
            <person name="Galibert F."/>
            <person name="Aves S.J."/>
            <person name="Xiang Z."/>
            <person name="Hunt C."/>
            <person name="Moore K."/>
            <person name="Hurst S.M."/>
            <person name="Lucas M."/>
            <person name="Rochet M."/>
            <person name="Gaillardin C."/>
            <person name="Tallada V.A."/>
            <person name="Garzon A."/>
            <person name="Thode G."/>
            <person name="Daga R.R."/>
            <person name="Cruzado L."/>
            <person name="Jimenez J."/>
            <person name="Sanchez M."/>
            <person name="del Rey F."/>
            <person name="Benito J."/>
            <person name="Dominguez A."/>
            <person name="Revuelta J.L."/>
            <person name="Moreno S."/>
            <person name="Armstrong J."/>
            <person name="Forsburg S.L."/>
            <person name="Cerutti L."/>
            <person name="Lowe T."/>
            <person name="McCombie W.R."/>
            <person name="Paulsen I."/>
            <person name="Potashkin J."/>
            <person name="Shpakovski G.V."/>
            <person name="Ussery D."/>
            <person name="Barrell B.G."/>
            <person name="Nurse P."/>
        </authorList>
    </citation>
    <scope>NUCLEOTIDE SEQUENCE [LARGE SCALE GENOMIC DNA]</scope>
    <source>
        <strain>972 / ATCC 24843</strain>
    </source>
</reference>
<reference key="4">
    <citation type="journal article" date="2001" name="J. Biol. Chem.">
        <title>Fission yeast homolog of murine Int-6 protein, encoded by mouse mammary tumor virus integration site, is associated with the conserved core subunits of eukaryotic translation initiation factor 3.</title>
        <authorList>
            <person name="Akiyoshi Y."/>
            <person name="Clayton J."/>
            <person name="Phan L."/>
            <person name="Yamamoto M."/>
            <person name="Hinnebusch A.G."/>
            <person name="Watanabe Y."/>
            <person name="Asano K."/>
        </authorList>
    </citation>
    <scope>IDENTIFICATION IN THE EIF-3 COMPLEX</scope>
    <scope>IDENTIFICATION BY MASS SPECTROMETRY</scope>
</reference>
<reference key="5">
    <citation type="journal article" date="2002" name="J. Biol. Chem.">
        <title>Moe1 and spInt6, the fission yeast homologues of mammalian translation initiation factor 3 subunits p66 (eIF3d) and p48 (eIF3e), respectively, are required for stable association of eIF3 subunits.</title>
        <authorList>
            <person name="Bandyopadhyay A."/>
            <person name="Lakshmanan V."/>
            <person name="Matsumoto T."/>
            <person name="Chang E.C."/>
            <person name="Maitra U."/>
        </authorList>
    </citation>
    <scope>INTERACTION WITH INT6; MOE1 AND SPAC25G10.08</scope>
</reference>
<reference key="6">
    <citation type="journal article" date="2005" name="BMC Biol.">
        <title>PCI proteins eIF3e and eIF3m define distinct translation initiation factor 3 complexes.</title>
        <authorList>
            <person name="Zhou C."/>
            <person name="Arslan F."/>
            <person name="Wee S."/>
            <person name="Krishnan S."/>
            <person name="Ivanov A.R."/>
            <person name="Oliva A."/>
            <person name="Leatherwood J."/>
            <person name="Wolf D.A."/>
        </authorList>
    </citation>
    <scope>IDENTIFICATION IN THE EIF-3 COMPLEX</scope>
    <scope>IDENTIFICATION BY MASS SPECTROMETRY</scope>
</reference>
<reference key="7">
    <citation type="journal article" date="2006" name="Nat. Biotechnol.">
        <title>ORFeome cloning and global analysis of protein localization in the fission yeast Schizosaccharomyces pombe.</title>
        <authorList>
            <person name="Matsuyama A."/>
            <person name="Arai R."/>
            <person name="Yashiroda Y."/>
            <person name="Shirai A."/>
            <person name="Kamata A."/>
            <person name="Sekido S."/>
            <person name="Kobayashi Y."/>
            <person name="Hashimoto A."/>
            <person name="Hamamoto M."/>
            <person name="Hiraoka Y."/>
            <person name="Horinouchi S."/>
            <person name="Yoshida M."/>
        </authorList>
    </citation>
    <scope>SUBCELLULAR LOCATION [LARGE SCALE ANALYSIS]</scope>
</reference>
<comment type="function">
    <text evidence="1 5">Component of the eukaryotic translation initiation factor 3 (eIF-3) complex, which is involved in protein synthesis of a specialized repertoire of mRNAs and, together with other initiation factors, stimulates binding of mRNA and methionyl-tRNAi to the 40S ribosome. The eIF-3 complex specifically targets and initiates translation of a subset of mRNAs involved in cell proliferation.</text>
</comment>
<comment type="subunit">
    <text evidence="1 2 3">Component of the eukaryotic translation initiation factor 3 (eIF-3) complex. The eIF-3 complex appears to include tif32/eif3a, SPAC25G10.08/eif3b, tif33/eif3c, SPBC4C3.07/eif3f, tif35/eif3g and sum1/eif3i. This set of common subunits may also associate exclusively with either moe1/eif3d and int6/eif3e, or with SPAC821.05/eif3h and SPAC1751.03/eif3m. The eIF-3 complex may also include SPAC3A12.13c/eif3j.</text>
</comment>
<comment type="subcellular location">
    <subcellularLocation>
        <location evidence="1 4">Cytoplasm</location>
    </subcellularLocation>
    <subcellularLocation>
        <location evidence="4">Nucleus</location>
    </subcellularLocation>
</comment>
<comment type="similarity">
    <text evidence="1">Belongs to the eIF-3 subunit I family.</text>
</comment>
<comment type="sequence caution" evidence="6">
    <conflict type="erroneous initiation">
        <sequence resource="EMBL-CDS" id="BAA13849"/>
    </conflict>
</comment>
<sequence>MRPIILQGHERPLTQIKYNHDGDLLFSCAKDKVINVWFSHNGERLGTYEGHTGAIWTCDINKSSTLMVSGAADNTMRLWDVKTGKQLYKWEFPTAVKRVEFNEDDTRILAVTEERMGYAGTVTVFRVPISESDAAAETPLYVITTRESKATVAGWSYLSKFLFTGHEDGSVSRYDAITGEFVESKQVHNSGSTITDLQFYPDRTYFITSCKDTTAKAIDVDSFEVIKTYLTDTPLNTSSFTPVQDFVILGGGQEARDVTTTAARQGKFEARFYHAILEEELGRVKGHFGPINTIAVHPKGTGYASGGEDGYVRVHFFDKNYFDFKYTL</sequence>
<gene>
    <name type="primary">sum1</name>
    <name type="synonym">eif3i</name>
    <name type="synonym">tif34</name>
    <name type="ORF">SPAC4D7.05</name>
</gene>
<dbReference type="EMBL" id="Y09529">
    <property type="protein sequence ID" value="CAA70722.1"/>
    <property type="molecule type" value="mRNA"/>
</dbReference>
<dbReference type="EMBL" id="D89187">
    <property type="protein sequence ID" value="BAA13849.1"/>
    <property type="status" value="ALT_INIT"/>
    <property type="molecule type" value="mRNA"/>
</dbReference>
<dbReference type="EMBL" id="CU329670">
    <property type="protein sequence ID" value="CAB11277.1"/>
    <property type="molecule type" value="Genomic_DNA"/>
</dbReference>
<dbReference type="PIR" id="T38796">
    <property type="entry name" value="T38796"/>
</dbReference>
<dbReference type="PIR" id="T42745">
    <property type="entry name" value="T42745"/>
</dbReference>
<dbReference type="PIR" id="T46558">
    <property type="entry name" value="T46558"/>
</dbReference>
<dbReference type="RefSeq" id="NP_594958.1">
    <property type="nucleotide sequence ID" value="NM_001020389.2"/>
</dbReference>
<dbReference type="SMR" id="P79083"/>
<dbReference type="BioGRID" id="279954">
    <property type="interactions" value="29"/>
</dbReference>
<dbReference type="FunCoup" id="P79083">
    <property type="interactions" value="622"/>
</dbReference>
<dbReference type="STRING" id="284812.P79083"/>
<dbReference type="iPTMnet" id="P79083"/>
<dbReference type="PaxDb" id="4896-SPAC4D7.05.1"/>
<dbReference type="EnsemblFungi" id="SPAC4D7.05.1">
    <property type="protein sequence ID" value="SPAC4D7.05.1:pep"/>
    <property type="gene ID" value="SPAC4D7.05"/>
</dbReference>
<dbReference type="GeneID" id="2543537"/>
<dbReference type="KEGG" id="spo:2543537"/>
<dbReference type="PomBase" id="SPAC4D7.05">
    <property type="gene designation" value="sum1"/>
</dbReference>
<dbReference type="VEuPathDB" id="FungiDB:SPAC4D7.05"/>
<dbReference type="eggNOG" id="KOG0643">
    <property type="taxonomic scope" value="Eukaryota"/>
</dbReference>
<dbReference type="HOGENOM" id="CLU_043845_0_1_1"/>
<dbReference type="InParanoid" id="P79083"/>
<dbReference type="OMA" id="VWFSHNG"/>
<dbReference type="PhylomeDB" id="P79083"/>
<dbReference type="Reactome" id="R-SPO-156827">
    <property type="pathway name" value="L13a-mediated translational silencing of Ceruloplasmin expression"/>
</dbReference>
<dbReference type="Reactome" id="R-SPO-72649">
    <property type="pathway name" value="Translation initiation complex formation"/>
</dbReference>
<dbReference type="Reactome" id="R-SPO-72689">
    <property type="pathway name" value="Formation of a pool of free 40S subunits"/>
</dbReference>
<dbReference type="Reactome" id="R-SPO-72695">
    <property type="pathway name" value="Formation of the ternary complex, and subsequently, the 43S complex"/>
</dbReference>
<dbReference type="Reactome" id="R-SPO-72702">
    <property type="pathway name" value="Ribosomal scanning and start codon recognition"/>
</dbReference>
<dbReference type="Reactome" id="R-SPO-72706">
    <property type="pathway name" value="GTP hydrolysis and joining of the 60S ribosomal subunit"/>
</dbReference>
<dbReference type="PRO" id="PR:P79083"/>
<dbReference type="Proteomes" id="UP000002485">
    <property type="component" value="Chromosome I"/>
</dbReference>
<dbReference type="GO" id="GO:0005737">
    <property type="term" value="C:cytoplasm"/>
    <property type="evidence" value="ECO:0000314"/>
    <property type="project" value="PomBase"/>
</dbReference>
<dbReference type="GO" id="GO:0010494">
    <property type="term" value="C:cytoplasmic stress granule"/>
    <property type="evidence" value="ECO:0000269"/>
    <property type="project" value="PomBase"/>
</dbReference>
<dbReference type="GO" id="GO:0005829">
    <property type="term" value="C:cytosol"/>
    <property type="evidence" value="ECO:0007005"/>
    <property type="project" value="PomBase"/>
</dbReference>
<dbReference type="GO" id="GO:0016282">
    <property type="term" value="C:eukaryotic 43S preinitiation complex"/>
    <property type="evidence" value="ECO:0000314"/>
    <property type="project" value="PomBase"/>
</dbReference>
<dbReference type="GO" id="GO:0033290">
    <property type="term" value="C:eukaryotic 48S preinitiation complex"/>
    <property type="evidence" value="ECO:0007669"/>
    <property type="project" value="UniProtKB-UniRule"/>
</dbReference>
<dbReference type="GO" id="GO:0005852">
    <property type="term" value="C:eukaryotic translation initiation factor 3 complex"/>
    <property type="evidence" value="ECO:0000314"/>
    <property type="project" value="PomBase"/>
</dbReference>
<dbReference type="GO" id="GO:0071540">
    <property type="term" value="C:eukaryotic translation initiation factor 3 complex, eIF3e"/>
    <property type="evidence" value="ECO:0000314"/>
    <property type="project" value="PomBase"/>
</dbReference>
<dbReference type="GO" id="GO:0071541">
    <property type="term" value="C:eukaryotic translation initiation factor 3 complex, eIF3m"/>
    <property type="evidence" value="ECO:0000314"/>
    <property type="project" value="PomBase"/>
</dbReference>
<dbReference type="GO" id="GO:0034399">
    <property type="term" value="C:nuclear periphery"/>
    <property type="evidence" value="ECO:0000314"/>
    <property type="project" value="PomBase"/>
</dbReference>
<dbReference type="GO" id="GO:0003723">
    <property type="term" value="F:RNA binding"/>
    <property type="evidence" value="ECO:0000318"/>
    <property type="project" value="GO_Central"/>
</dbReference>
<dbReference type="GO" id="GO:0003743">
    <property type="term" value="F:translation initiation factor activity"/>
    <property type="evidence" value="ECO:0000318"/>
    <property type="project" value="GO_Central"/>
</dbReference>
<dbReference type="GO" id="GO:0002183">
    <property type="term" value="P:cytoplasmic translational initiation"/>
    <property type="evidence" value="ECO:0000315"/>
    <property type="project" value="PomBase"/>
</dbReference>
<dbReference type="GO" id="GO:0001732">
    <property type="term" value="P:formation of cytoplasmic translation initiation complex"/>
    <property type="evidence" value="ECO:0000305"/>
    <property type="project" value="PomBase"/>
</dbReference>
<dbReference type="FunFam" id="2.130.10.10:FF:000127">
    <property type="entry name" value="Eukaryotic translation initiation factor 3 subunit I"/>
    <property type="match status" value="1"/>
</dbReference>
<dbReference type="Gene3D" id="2.130.10.10">
    <property type="entry name" value="YVTN repeat-like/Quinoprotein amine dehydrogenase"/>
    <property type="match status" value="1"/>
</dbReference>
<dbReference type="HAMAP" id="MF_03008">
    <property type="entry name" value="eIF3i"/>
    <property type="match status" value="1"/>
</dbReference>
<dbReference type="InterPro" id="IPR027525">
    <property type="entry name" value="eIF3i"/>
</dbReference>
<dbReference type="InterPro" id="IPR015943">
    <property type="entry name" value="WD40/YVTN_repeat-like_dom_sf"/>
</dbReference>
<dbReference type="InterPro" id="IPR019775">
    <property type="entry name" value="WD40_repeat_CS"/>
</dbReference>
<dbReference type="InterPro" id="IPR036322">
    <property type="entry name" value="WD40_repeat_dom_sf"/>
</dbReference>
<dbReference type="InterPro" id="IPR001680">
    <property type="entry name" value="WD40_rpt"/>
</dbReference>
<dbReference type="PANTHER" id="PTHR19877">
    <property type="entry name" value="EUKARYOTIC TRANSLATION INITIATION FACTOR 3 SUBUNIT I"/>
    <property type="match status" value="1"/>
</dbReference>
<dbReference type="PANTHER" id="PTHR19877:SF1">
    <property type="entry name" value="EUKARYOTIC TRANSLATION INITIATION FACTOR 3 SUBUNIT I"/>
    <property type="match status" value="1"/>
</dbReference>
<dbReference type="Pfam" id="PF24805">
    <property type="entry name" value="EIF3I"/>
    <property type="match status" value="1"/>
</dbReference>
<dbReference type="SMART" id="SM00320">
    <property type="entry name" value="WD40"/>
    <property type="match status" value="5"/>
</dbReference>
<dbReference type="SUPFAM" id="SSF50978">
    <property type="entry name" value="WD40 repeat-like"/>
    <property type="match status" value="1"/>
</dbReference>
<dbReference type="PROSITE" id="PS00678">
    <property type="entry name" value="WD_REPEATS_1"/>
    <property type="match status" value="1"/>
</dbReference>
<dbReference type="PROSITE" id="PS50082">
    <property type="entry name" value="WD_REPEATS_2"/>
    <property type="match status" value="3"/>
</dbReference>
<dbReference type="PROSITE" id="PS50294">
    <property type="entry name" value="WD_REPEATS_REGION"/>
    <property type="match status" value="2"/>
</dbReference>
<protein>
    <recommendedName>
        <fullName evidence="1">Eukaryotic translation initiation factor 3 subunit I</fullName>
        <shortName evidence="1">eIF3i</shortName>
    </recommendedName>
    <alternativeName>
        <fullName evidence="1">Eukaryotic translation initiation factor 3 39 kDa subunit homolog</fullName>
        <shortName evidence="1">eIF-3 39 kDa subunit homolog</shortName>
        <shortName>eIF3 p39</shortName>
    </alternativeName>
    <alternativeName>
        <fullName>Suppressor of uncontrolled mitosis 1</fullName>
    </alternativeName>
</protein>
<accession>P79083</accession>
<accession>P78838</accession>
<keyword id="KW-0963">Cytoplasm</keyword>
<keyword id="KW-0396">Initiation factor</keyword>
<keyword id="KW-0539">Nucleus</keyword>
<keyword id="KW-0648">Protein biosynthesis</keyword>
<keyword id="KW-1185">Reference proteome</keyword>
<keyword id="KW-0677">Repeat</keyword>
<keyword id="KW-0853">WD repeat</keyword>
<evidence type="ECO:0000255" key="1">
    <source>
        <dbReference type="HAMAP-Rule" id="MF_03008"/>
    </source>
</evidence>
<evidence type="ECO:0000269" key="2">
    <source>
    </source>
</evidence>
<evidence type="ECO:0000269" key="3">
    <source>
    </source>
</evidence>
<evidence type="ECO:0000269" key="4">
    <source>
    </source>
</evidence>
<evidence type="ECO:0000269" key="5">
    <source>
    </source>
</evidence>
<evidence type="ECO:0000305" key="6"/>
<feature type="chain" id="PRO_0000051040" description="Eukaryotic translation initiation factor 3 subunit I">
    <location>
        <begin position="1"/>
        <end position="328"/>
    </location>
</feature>
<feature type="repeat" description="WD 1">
    <location>
        <begin position="8"/>
        <end position="49"/>
    </location>
</feature>
<feature type="repeat" description="WD 2">
    <location>
        <begin position="50"/>
        <end position="89"/>
    </location>
</feature>
<feature type="repeat" description="WD 3">
    <location>
        <begin position="145"/>
        <end position="184"/>
    </location>
</feature>
<feature type="repeat" description="WD 4">
    <location>
        <begin position="189"/>
        <end position="228"/>
    </location>
</feature>
<feature type="repeat" description="WD 5">
    <location>
        <begin position="286"/>
        <end position="327"/>
    </location>
</feature>
<name>EIF3I_SCHPO</name>
<organism>
    <name type="scientific">Schizosaccharomyces pombe (strain 972 / ATCC 24843)</name>
    <name type="common">Fission yeast</name>
    <dbReference type="NCBI Taxonomy" id="284812"/>
    <lineage>
        <taxon>Eukaryota</taxon>
        <taxon>Fungi</taxon>
        <taxon>Dikarya</taxon>
        <taxon>Ascomycota</taxon>
        <taxon>Taphrinomycotina</taxon>
        <taxon>Schizosaccharomycetes</taxon>
        <taxon>Schizosaccharomycetales</taxon>
        <taxon>Schizosaccharomycetaceae</taxon>
        <taxon>Schizosaccharomyces</taxon>
    </lineage>
</organism>
<proteinExistence type="evidence at protein level"/>